<gene>
    <name type="primary">env</name>
</gene>
<protein>
    <recommendedName>
        <fullName>Envelope glycoprotein gp95</fullName>
    </recommendedName>
    <alternativeName>
        <fullName>Env polyprotein</fullName>
    </alternativeName>
    <component>
        <recommendedName>
            <fullName>Surface protein</fullName>
            <shortName>SU</shortName>
        </recommendedName>
        <alternativeName>
            <fullName>Glycoprotein 85</fullName>
            <shortName>gp85</shortName>
        </alternativeName>
    </component>
    <component>
        <recommendedName>
            <fullName>Transmembrane protein</fullName>
            <shortName>TM</shortName>
        </recommendedName>
        <alternativeName>
            <fullName>Glycoprotein 37</fullName>
            <shortName>gp37</shortName>
        </alternativeName>
    </component>
</protein>
<comment type="function">
    <molecule>Surface protein</molecule>
    <text evidence="3 8">The surface protein (SU) attaches the virus to the host cell entry receptor TVB-S3/CAR1 (PubMed:8945512). This interaction triggers the refolding of the transmembrane protein (TM) thereby unmasking its fusion peptide and the formation of a reactive thiolate on Cys-100 to activate its fusogenic potential. Fusion occurs at the host cell plasma membrane (By similarity).</text>
</comment>
<comment type="function">
    <molecule>Transmembrane protein</molecule>
    <text evidence="3">The transmembrane protein (TM) acts as a class I viral fusion protein. Under the current model, the protein has at least 3 conformational states: pre-fusion native state, pre-hairpin intermediate state, and post-fusion hairpin state. During viral and target cell membrane fusion, the coiled coil regions (heptad repeats) assume a trimer-of-hairpins structure, positioning the fusion peptide in close proximity to the C-terminal region of the ectodomain. The formation of this structure appears to drive apposition and subsequent fusion of viral and target cell membranes. Membranes fusion leads to delivery of the nucleocapsid into the cytoplasm.</text>
</comment>
<comment type="subunit">
    <molecule>Surface protein</molecule>
    <text evidence="3 7 8">Heterodimer with the transmembrane protein. The mature envelope protein (Env) consists of a trimer of SU-TM heterodimers attached by a labile interchain disulfide bond (By similarity). Interacts with the host cell entry receptor TVB-S3; this interaction allows the viral attachment (PubMed:16051833, PubMed:8945512).</text>
</comment>
<comment type="subunit">
    <molecule>Transmembrane protein</molecule>
    <text evidence="3">Heterodimer with the surface protein. The mature envelope protein (Env) consists of a trimer of SU-TM heterodimers attached by a labile interchain disulfide bond.</text>
</comment>
<comment type="subcellular location">
    <molecule>Transmembrane protein</molecule>
    <subcellularLocation>
        <location evidence="10">Virion membrane</location>
        <topology evidence="9">Single-pass type I membrane protein</topology>
    </subcellularLocation>
    <subcellularLocation>
        <location evidence="10">Host cell membrane</location>
        <topology evidence="9">Single-pass type I membrane protein</topology>
    </subcellularLocation>
</comment>
<comment type="subcellular location">
    <molecule>Surface protein</molecule>
    <subcellularLocation>
        <location evidence="10">Virion membrane</location>
        <topology>Peripheral membrane protein</topology>
    </subcellularLocation>
    <subcellularLocation>
        <location evidence="10">Host cell membrane</location>
        <topology>Peripheral membrane protein</topology>
    </subcellularLocation>
    <text evidence="1">The surface protein is not anchored to the viral envelope, but associates with the extravirion surface through its binding to TM. Both proteins are thought to be concentrated at the site of budding and incorporated into the virions possibly by contacts between the cytoplasmic tail of Env and the N-terminus of Gag (By similarity).</text>
</comment>
<comment type="domain">
    <molecule>Envelope glycoprotein gp95</molecule>
    <text evidence="1">The 17 amino acids long immunosuppressive region is present in many retroviral envelope proteins. Synthetic peptides derived from this relatively conserved sequence inhibit immune function in vitro and in vivo (By similarity).</text>
</comment>
<comment type="PTM">
    <molecule>Envelope glycoprotein gp95</molecule>
    <text evidence="1">Specific enzymatic cleavages in vivo yield mature proteins. Envelope glycoproteins are synthesized as an inactive precursor that is N-glycosylated and processed likely by host cell furin or by a furin-like protease in the Golgi to yield the mature SU and TM proteins. The cleavage site between SU and TM requires the minimal sequence [KR]-X-[KR]-R (By similarity).</text>
</comment>
<comment type="PTM">
    <molecule>Transmembrane protein</molecule>
    <text evidence="2">The transmembrane protein is palmitoylated. Palmitoylation is necessary for glycoprotein function and infectivity.</text>
</comment>
<comment type="similarity">
    <text evidence="10">Belongs to the Alpharetroviruses envelope glycoprotein family.</text>
</comment>
<organism>
    <name type="scientific">Rous sarcoma virus subgroup B (strain Schmidt-Ruppin)</name>
    <name type="common">RSV-SR-B</name>
    <dbReference type="NCBI Taxonomy" id="269447"/>
    <lineage>
        <taxon>Viruses</taxon>
        <taxon>Riboviria</taxon>
        <taxon>Pararnavirae</taxon>
        <taxon>Artverviricota</taxon>
        <taxon>Revtraviricetes</taxon>
        <taxon>Ortervirales</taxon>
        <taxon>Retroviridae</taxon>
        <taxon>Orthoretrovirinae</taxon>
        <taxon>Alpharetrovirus</taxon>
        <taxon>Rous sarcoma virus</taxon>
    </lineage>
</organism>
<name>ENV_RSVSB</name>
<feature type="signal peptide" evidence="5">
    <location>
        <begin position="1"/>
        <end position="62"/>
    </location>
</feature>
<feature type="chain" id="PRO_0000457318" description="Envelope glycoprotein gp95">
    <location>
        <begin position="63"/>
        <end position="613"/>
    </location>
</feature>
<feature type="chain" id="PRO_0000457319" description="Surface protein">
    <location>
        <begin position="63"/>
        <end position="408"/>
    </location>
</feature>
<feature type="chain" id="PRO_0000457320" description="Transmembrane protein">
    <location>
        <begin position="409"/>
        <end position="613"/>
    </location>
</feature>
<feature type="topological domain" description="Extracellular" evidence="5">
    <location>
        <begin position="63"/>
        <end position="559"/>
    </location>
</feature>
<feature type="transmembrane region" description="Helical" evidence="5">
    <location>
        <begin position="560"/>
        <end position="580"/>
    </location>
</feature>
<feature type="topological domain" description="Extracellular" evidence="5">
    <location>
        <begin position="581"/>
        <end position="613"/>
    </location>
</feature>
<feature type="region of interest" description="Disordered" evidence="6">
    <location>
        <begin position="14"/>
        <end position="36"/>
    </location>
</feature>
<feature type="region of interest" description="Binding to host receptor" evidence="3">
    <location>
        <begin position="184"/>
        <end position="233"/>
    </location>
</feature>
<feature type="region of interest" description="Binding to host receptor" evidence="3">
    <location>
        <begin position="268"/>
        <end position="294"/>
    </location>
</feature>
<feature type="region of interest" description="Fusion peptide" evidence="3">
    <location>
        <begin position="425"/>
        <end position="445"/>
    </location>
</feature>
<feature type="region of interest" description="Immunosuppression" evidence="1">
    <location>
        <begin position="481"/>
        <end position="497"/>
    </location>
</feature>
<feature type="site" description="Cleavage; by host" evidence="2">
    <location>
        <begin position="408"/>
        <end position="409"/>
    </location>
</feature>
<feature type="lipid moiety-binding region" description="S-palmitoyl cysteine; by host" evidence="2">
    <location>
        <position position="572"/>
    </location>
</feature>
<feature type="lipid moiety-binding region" description="S-palmitoyl cysteine; by host" evidence="2">
    <location>
        <position position="575"/>
    </location>
</feature>
<feature type="glycosylation site" description="N-linked (GlcNAc...) asparagine; by host" evidence="5">
    <location>
        <position position="120"/>
    </location>
</feature>
<feature type="glycosylation site" description="N-linked (GlcNAc...) asparagine; by host" evidence="5">
    <location>
        <position position="140"/>
    </location>
</feature>
<feature type="glycosylation site" description="N-linked (GlcNAc...) asparagine; by host" evidence="5">
    <location>
        <position position="157"/>
    </location>
</feature>
<feature type="glycosylation site" description="N-linked (GlcNAc...) asparagine; by host" evidence="5">
    <location>
        <position position="177"/>
    </location>
</feature>
<feature type="glycosylation site" description="N-linked (GlcNAc...) asparagine; by host" evidence="5">
    <location>
        <position position="230"/>
    </location>
</feature>
<feature type="glycosylation site" description="N-linked (GlcNAc...) asparagine; by host" evidence="5">
    <location>
        <position position="264"/>
    </location>
</feature>
<feature type="glycosylation site" description="N-linked (GlcNAc...) asparagine; by host" evidence="5">
    <location>
        <position position="271"/>
    </location>
</feature>
<feature type="glycosylation site" description="N-linked (GlcNAc...) asparagine; by host" evidence="5">
    <location>
        <position position="297"/>
    </location>
</feature>
<feature type="glycosylation site" description="N-linked (GlcNAc...) asparagine; by host" evidence="5">
    <location>
        <position position="303"/>
    </location>
</feature>
<feature type="glycosylation site" description="N-linked (GlcNAc...) asparagine; by host" evidence="5">
    <location>
        <position position="313"/>
    </location>
</feature>
<feature type="glycosylation site" description="N-linked (GlcNAc...) asparagine; by host" evidence="5">
    <location>
        <position position="321"/>
    </location>
</feature>
<feature type="glycosylation site" description="N-linked (GlcNAc...) asparagine; by host" evidence="5">
    <location>
        <position position="388"/>
    </location>
</feature>
<feature type="glycosylation site" description="N-linked (GlcNAc...) asparagine; by host" evidence="5">
    <location>
        <position position="398"/>
    </location>
</feature>
<feature type="glycosylation site" description="N-linked (GlcNAc...) asparagine; by host" evidence="5">
    <location>
        <position position="460"/>
    </location>
</feature>
<feature type="glycosylation site" description="N-linked (GlcNAc...) asparagine; by host" evidence="5">
    <location>
        <position position="508"/>
    </location>
</feature>
<feature type="glycosylation site" description="N-linked (GlcNAc...) asparagine; by host" evidence="5">
    <location>
        <position position="589"/>
    </location>
</feature>
<feature type="disulfide bond" description="Interchain" evidence="3">
    <location>
        <begin position="87"/>
        <end position="506"/>
    </location>
</feature>
<feature type="disulfide bond" evidence="3">
    <location>
        <begin position="121"/>
        <end position="151"/>
    </location>
</feature>
<feature type="disulfide bond" evidence="3">
    <location>
        <begin position="191"/>
        <end position="252"/>
    </location>
</feature>
<feature type="disulfide bond" evidence="3">
    <location>
        <begin position="265"/>
        <end position="275"/>
    </location>
</feature>
<feature type="disulfide bond" evidence="3">
    <location>
        <begin position="360"/>
        <end position="377"/>
    </location>
</feature>
<feature type="disulfide bond" evidence="4">
    <location>
        <begin position="417"/>
        <end position="453"/>
    </location>
</feature>
<feature type="disulfide bond" evidence="4">
    <location>
        <begin position="498"/>
        <end position="505"/>
    </location>
</feature>
<reference key="1">
    <citation type="submission" date="1998-03" db="EMBL/GenBank/DDBJ databases">
        <title>Complete nucleotide sequence of avian sarcoma virus.</title>
        <authorList>
            <person name="Bouck J."/>
            <person name="Skalka A.M."/>
            <person name="Katz R.A."/>
        </authorList>
    </citation>
    <scope>NUCLEOTIDE SEQUENCE [GENOMIC DNA]</scope>
</reference>
<reference key="2">
    <citation type="journal article" date="1996" name="Cell">
        <title>CAR1, a TNFR-related protein, is a cellular receptor for cytopathic avian leukosis-sarcoma viruses and mediates apoptosis.</title>
        <authorList>
            <person name="Brojatsch J."/>
            <person name="Naughton J."/>
            <person name="Rolls M.M."/>
            <person name="Zingler K."/>
            <person name="Young J.A."/>
        </authorList>
    </citation>
    <scope>FUNCTION</scope>
    <scope>INTERACTION WITH HOST TVBS3/CAR1</scope>
</reference>
<reference key="3">
    <citation type="journal article" date="2005" name="J. Virol.">
        <title>The receptor for the subgroup C avian sarcoma and leukosis viruses, Tvc, is related to mammalian butyrophilins, members of the immunoglobulin superfamily.</title>
        <authorList>
            <person name="Elleder D."/>
            <person name="Stepanets V."/>
            <person name="Melder D.C."/>
            <person name="Senigl F."/>
            <person name="Geryk J."/>
            <person name="Pajer P."/>
            <person name="Plachy J."/>
            <person name="Hejnar J."/>
            <person name="Svoboda J."/>
            <person name="Federspiel M.J."/>
        </authorList>
    </citation>
    <scope>INTERACTION WITH HOST RECEPTOR TVBS3/CAR1</scope>
</reference>
<reference key="4">
    <citation type="journal article" date="2019" name="Viruses">
        <title>Reverse Engineering Provides Insights on the Evolution of Subgroups A to E Avian Sarcoma and Leukosis Virus Receptor Specificity.</title>
        <authorList>
            <person name="Federspiel M.J."/>
        </authorList>
    </citation>
    <scope>REVIEW</scope>
</reference>
<proteinExistence type="evidence at protein level"/>
<accession>O92955</accession>
<evidence type="ECO:0000250" key="1"/>
<evidence type="ECO:0000250" key="2">
    <source>
        <dbReference type="UniProtKB" id="P03396"/>
    </source>
</evidence>
<evidence type="ECO:0000250" key="3">
    <source>
        <dbReference type="UniProtKB" id="P0DTM4"/>
    </source>
</evidence>
<evidence type="ECO:0000250" key="4">
    <source>
        <dbReference type="UniProtKB" id="P0DTM5"/>
    </source>
</evidence>
<evidence type="ECO:0000255" key="5"/>
<evidence type="ECO:0000256" key="6">
    <source>
        <dbReference type="SAM" id="MobiDB-lite"/>
    </source>
</evidence>
<evidence type="ECO:0000269" key="7">
    <source>
    </source>
</evidence>
<evidence type="ECO:0000269" key="8">
    <source>
    </source>
</evidence>
<evidence type="ECO:0000303" key="9">
    <source>
    </source>
</evidence>
<evidence type="ECO:0000305" key="10"/>
<keyword id="KW-1015">Disulfide bond</keyword>
<keyword id="KW-1169">Fusion of virus membrane with host cell membrane</keyword>
<keyword id="KW-1168">Fusion of virus membrane with host membrane</keyword>
<keyword id="KW-0325">Glycoprotein</keyword>
<keyword id="KW-1032">Host cell membrane</keyword>
<keyword id="KW-1043">Host membrane</keyword>
<keyword id="KW-0945">Host-virus interaction</keyword>
<keyword id="KW-0449">Lipoprotein</keyword>
<keyword id="KW-0472">Membrane</keyword>
<keyword id="KW-0564">Palmitate</keyword>
<keyword id="KW-0732">Signal</keyword>
<keyword id="KW-0812">Transmembrane</keyword>
<keyword id="KW-1133">Transmembrane helix</keyword>
<keyword id="KW-1161">Viral attachment to host cell</keyword>
<keyword id="KW-1162">Viral penetration into host cytoplasm</keyword>
<keyword id="KW-0946">Virion</keyword>
<keyword id="KW-1160">Virus entry into host cell</keyword>
<sequence length="613" mass="67030">MEAVIKAVLTGYPGETSKKDSKKKPPATSKKDPEKTPLLPTRVNYILIIGVLVLCEVTGVRADVHLLEQPGNLWITWASRTGQTDFCLSTQSATSPFQTCLIGIPSPISEGDFKGYVSDNCTTLEPHRLVSRGIPGGPENSTTLTYQKVSCLLLKLNVSLLDEPSELQLLGSQSLPNITNITRIPSVAGGCIGFTPYDSPAGVYGWDRREVTHILLTDPGNNPFFDKASNSSKPFTVVTADRHNLFMGSEYCGAYGYRFWEMYNCSQMRQNWSICQDVWGRGPPENWCTSTGGTWVNQSKEFNETEPFSFTVNCTGSNLGNVSGCCGEPITILPPEAWVDSTQGSFTKPKALPPAIFLICGDRAWQGIPSRPVGGPCYLGKLTMLAPNHTDILKILANSSRTGIRRKRSVSHLDDTCSDEVQLWGPTARIFASILAPGVAAAQALKEIERLACWSVKQANLTTSLLGDLLDDVTSIRHAVLQNRAAIDFLLLAHGHGCEDVAGMCCFNLSDHSESIQKKFQLMKEHVNKIGVDSDPIGSWLRGLFGGIGEWAVHLLKGLLLGLVVILLLVVCLPCLLQIVCGNIRKMINNSISYHTEYKKLQKAYGQPESRIV</sequence>
<dbReference type="EMBL" id="AF052428">
    <property type="protein sequence ID" value="AAC08989.1"/>
    <property type="molecule type" value="Genomic_DNA"/>
</dbReference>
<dbReference type="PIR" id="B47611">
    <property type="entry name" value="B47611"/>
</dbReference>
<dbReference type="SMR" id="O92955"/>
<dbReference type="Proteomes" id="UP000159275">
    <property type="component" value="Genome"/>
</dbReference>
<dbReference type="GO" id="GO:0020002">
    <property type="term" value="C:host cell plasma membrane"/>
    <property type="evidence" value="ECO:0007669"/>
    <property type="project" value="UniProtKB-SubCell"/>
</dbReference>
<dbReference type="GO" id="GO:0016020">
    <property type="term" value="C:membrane"/>
    <property type="evidence" value="ECO:0007669"/>
    <property type="project" value="UniProtKB-KW"/>
</dbReference>
<dbReference type="GO" id="GO:0055036">
    <property type="term" value="C:virion membrane"/>
    <property type="evidence" value="ECO:0007669"/>
    <property type="project" value="UniProtKB-SubCell"/>
</dbReference>
<dbReference type="GO" id="GO:0019064">
    <property type="term" value="P:fusion of virus membrane with host plasma membrane"/>
    <property type="evidence" value="ECO:0007669"/>
    <property type="project" value="UniProtKB-KW"/>
</dbReference>
<dbReference type="GO" id="GO:0046718">
    <property type="term" value="P:symbiont entry into host cell"/>
    <property type="evidence" value="ECO:0007669"/>
    <property type="project" value="UniProtKB-KW"/>
</dbReference>
<dbReference type="GO" id="GO:0019062">
    <property type="term" value="P:virion attachment to host cell"/>
    <property type="evidence" value="ECO:0007669"/>
    <property type="project" value="UniProtKB-KW"/>
</dbReference>
<dbReference type="CDD" id="cd09949">
    <property type="entry name" value="RSV-like_HR1-HR2"/>
    <property type="match status" value="1"/>
</dbReference>
<dbReference type="Gene3D" id="1.10.287.210">
    <property type="match status" value="1"/>
</dbReference>
<dbReference type="InterPro" id="IPR005166">
    <property type="entry name" value="RSV_p95_env"/>
</dbReference>
<dbReference type="InterPro" id="IPR018154">
    <property type="entry name" value="TLV/ENV_coat_polyprotein"/>
</dbReference>
<dbReference type="PANTHER" id="PTHR10424:SF73">
    <property type="entry name" value="ENDOGENOUS RETROVIRUS GROUP FC1 ENV POLYPROTEIN-RELATED"/>
    <property type="match status" value="1"/>
</dbReference>
<dbReference type="PANTHER" id="PTHR10424">
    <property type="entry name" value="VIRAL ENVELOPE PROTEIN"/>
    <property type="match status" value="1"/>
</dbReference>
<dbReference type="Pfam" id="PF03708">
    <property type="entry name" value="Avian_gp85"/>
    <property type="match status" value="1"/>
</dbReference>
<dbReference type="Pfam" id="PF00429">
    <property type="entry name" value="TLV_coat"/>
    <property type="match status" value="1"/>
</dbReference>
<dbReference type="SUPFAM" id="SSF58069">
    <property type="entry name" value="Virus ectodomain"/>
    <property type="match status" value="1"/>
</dbReference>
<organismHost>
    <name type="scientific">Gallus gallus</name>
    <name type="common">Chicken</name>
    <dbReference type="NCBI Taxonomy" id="9031"/>
</organismHost>